<comment type="function">
    <text evidence="1">The RecF protein is involved in DNA metabolism; it is required for DNA replication and normal SOS inducibility. RecF binds preferentially to single-stranded, linear DNA. It also seems to bind ATP.</text>
</comment>
<comment type="subcellular location">
    <subcellularLocation>
        <location evidence="1">Cytoplasm</location>
    </subcellularLocation>
</comment>
<comment type="similarity">
    <text evidence="1">Belongs to the RecF family.</text>
</comment>
<reference key="1">
    <citation type="submission" date="2008-06" db="EMBL/GenBank/DDBJ databases">
        <title>Complete sequence of Stenotrophomonas maltophilia R551-3.</title>
        <authorList>
            <consortium name="US DOE Joint Genome Institute"/>
            <person name="Lucas S."/>
            <person name="Copeland A."/>
            <person name="Lapidus A."/>
            <person name="Glavina del Rio T."/>
            <person name="Dalin E."/>
            <person name="Tice H."/>
            <person name="Pitluck S."/>
            <person name="Chain P."/>
            <person name="Malfatti S."/>
            <person name="Shin M."/>
            <person name="Vergez L."/>
            <person name="Lang D."/>
            <person name="Schmutz J."/>
            <person name="Larimer F."/>
            <person name="Land M."/>
            <person name="Hauser L."/>
            <person name="Kyrpides N."/>
            <person name="Mikhailova N."/>
            <person name="Taghavi S."/>
            <person name="Monchy S."/>
            <person name="Newman L."/>
            <person name="Vangronsveld J."/>
            <person name="van der Lelie D."/>
            <person name="Richardson P."/>
        </authorList>
    </citation>
    <scope>NUCLEOTIDE SEQUENCE [LARGE SCALE GENOMIC DNA]</scope>
    <source>
        <strain>R551-3</strain>
    </source>
</reference>
<protein>
    <recommendedName>
        <fullName evidence="1">DNA replication and repair protein RecF</fullName>
    </recommendedName>
</protein>
<proteinExistence type="inferred from homology"/>
<dbReference type="EMBL" id="CP001111">
    <property type="protein sequence ID" value="ACF49708.1"/>
    <property type="molecule type" value="Genomic_DNA"/>
</dbReference>
<dbReference type="RefSeq" id="WP_012509600.1">
    <property type="nucleotide sequence ID" value="NC_011071.1"/>
</dbReference>
<dbReference type="SMR" id="B4SR07"/>
<dbReference type="STRING" id="391008.Smal_0003"/>
<dbReference type="KEGG" id="smt:Smal_0003"/>
<dbReference type="eggNOG" id="COG1195">
    <property type="taxonomic scope" value="Bacteria"/>
</dbReference>
<dbReference type="HOGENOM" id="CLU_040267_0_0_6"/>
<dbReference type="OrthoDB" id="9803889at2"/>
<dbReference type="Proteomes" id="UP000001867">
    <property type="component" value="Chromosome"/>
</dbReference>
<dbReference type="GO" id="GO:0005737">
    <property type="term" value="C:cytoplasm"/>
    <property type="evidence" value="ECO:0007669"/>
    <property type="project" value="UniProtKB-SubCell"/>
</dbReference>
<dbReference type="GO" id="GO:0005524">
    <property type="term" value="F:ATP binding"/>
    <property type="evidence" value="ECO:0007669"/>
    <property type="project" value="UniProtKB-UniRule"/>
</dbReference>
<dbReference type="GO" id="GO:0003697">
    <property type="term" value="F:single-stranded DNA binding"/>
    <property type="evidence" value="ECO:0007669"/>
    <property type="project" value="UniProtKB-UniRule"/>
</dbReference>
<dbReference type="GO" id="GO:0006260">
    <property type="term" value="P:DNA replication"/>
    <property type="evidence" value="ECO:0007669"/>
    <property type="project" value="UniProtKB-UniRule"/>
</dbReference>
<dbReference type="GO" id="GO:0000731">
    <property type="term" value="P:DNA synthesis involved in DNA repair"/>
    <property type="evidence" value="ECO:0007669"/>
    <property type="project" value="TreeGrafter"/>
</dbReference>
<dbReference type="GO" id="GO:0006302">
    <property type="term" value="P:double-strand break repair"/>
    <property type="evidence" value="ECO:0007669"/>
    <property type="project" value="TreeGrafter"/>
</dbReference>
<dbReference type="GO" id="GO:0009432">
    <property type="term" value="P:SOS response"/>
    <property type="evidence" value="ECO:0007669"/>
    <property type="project" value="UniProtKB-UniRule"/>
</dbReference>
<dbReference type="Gene3D" id="3.40.50.300">
    <property type="entry name" value="P-loop containing nucleotide triphosphate hydrolases"/>
    <property type="match status" value="1"/>
</dbReference>
<dbReference type="Gene3D" id="1.20.1050.90">
    <property type="entry name" value="RecF/RecN/SMC, N-terminal domain"/>
    <property type="match status" value="1"/>
</dbReference>
<dbReference type="HAMAP" id="MF_00365">
    <property type="entry name" value="RecF"/>
    <property type="match status" value="1"/>
</dbReference>
<dbReference type="InterPro" id="IPR001238">
    <property type="entry name" value="DNA-binding_RecF"/>
</dbReference>
<dbReference type="InterPro" id="IPR018078">
    <property type="entry name" value="DNA-binding_RecF_CS"/>
</dbReference>
<dbReference type="InterPro" id="IPR027417">
    <property type="entry name" value="P-loop_NTPase"/>
</dbReference>
<dbReference type="InterPro" id="IPR003395">
    <property type="entry name" value="RecF/RecN/SMC_N"/>
</dbReference>
<dbReference type="InterPro" id="IPR042174">
    <property type="entry name" value="RecF_2"/>
</dbReference>
<dbReference type="NCBIfam" id="TIGR00611">
    <property type="entry name" value="recf"/>
    <property type="match status" value="1"/>
</dbReference>
<dbReference type="PANTHER" id="PTHR32182">
    <property type="entry name" value="DNA REPLICATION AND REPAIR PROTEIN RECF"/>
    <property type="match status" value="1"/>
</dbReference>
<dbReference type="PANTHER" id="PTHR32182:SF0">
    <property type="entry name" value="DNA REPLICATION AND REPAIR PROTEIN RECF"/>
    <property type="match status" value="1"/>
</dbReference>
<dbReference type="Pfam" id="PF02463">
    <property type="entry name" value="SMC_N"/>
    <property type="match status" value="1"/>
</dbReference>
<dbReference type="SUPFAM" id="SSF52540">
    <property type="entry name" value="P-loop containing nucleoside triphosphate hydrolases"/>
    <property type="match status" value="1"/>
</dbReference>
<dbReference type="PROSITE" id="PS00617">
    <property type="entry name" value="RECF_1"/>
    <property type="match status" value="1"/>
</dbReference>
<dbReference type="PROSITE" id="PS00618">
    <property type="entry name" value="RECF_2"/>
    <property type="match status" value="1"/>
</dbReference>
<evidence type="ECO:0000255" key="1">
    <source>
        <dbReference type="HAMAP-Rule" id="MF_00365"/>
    </source>
</evidence>
<organism>
    <name type="scientific">Stenotrophomonas maltophilia (strain R551-3)</name>
    <dbReference type="NCBI Taxonomy" id="391008"/>
    <lineage>
        <taxon>Bacteria</taxon>
        <taxon>Pseudomonadati</taxon>
        <taxon>Pseudomonadota</taxon>
        <taxon>Gammaproteobacteria</taxon>
        <taxon>Lysobacterales</taxon>
        <taxon>Lysobacteraceae</taxon>
        <taxon>Stenotrophomonas</taxon>
        <taxon>Stenotrophomonas maltophilia group</taxon>
    </lineage>
</organism>
<sequence>MQIRRLALHQLRRFNAVELSPQPGLNLLTGDNGAGKTSILEALHLMAYGRSFRGRVRDGLVRQGQEALEIFVEWDEQRASHPPHRRKAGLRHSGQDWKGRLDGEDVAQLGNLCAALAVVTFEPGSHALVSGGGEPRRRFLDWGLFHVEPDFLSLWRRYSRALKQRNALLKQGGPSRMLDTWDHELAEAGEPLTSRRQHYLERLQQRTVALAAELAPQLGIQAMELSPGWRRHELPLADALLLARERDRQAGYTSVGPHRADWSVDFHNIPGRDALSRGQAKLTALACLLAQAEDYAEQRGEWPVIALDDLASELDRTHQARVLERLLGGPAQIFVTATETPAALQELTHIARFHVEHAQIVAVP</sequence>
<keyword id="KW-0067">ATP-binding</keyword>
<keyword id="KW-0963">Cytoplasm</keyword>
<keyword id="KW-0227">DNA damage</keyword>
<keyword id="KW-0234">DNA repair</keyword>
<keyword id="KW-0235">DNA replication</keyword>
<keyword id="KW-0238">DNA-binding</keyword>
<keyword id="KW-0547">Nucleotide-binding</keyword>
<keyword id="KW-0742">SOS response</keyword>
<name>RECF_STRM5</name>
<accession>B4SR07</accession>
<feature type="chain" id="PRO_1000121159" description="DNA replication and repair protein RecF">
    <location>
        <begin position="1"/>
        <end position="364"/>
    </location>
</feature>
<feature type="binding site" evidence="1">
    <location>
        <begin position="30"/>
        <end position="37"/>
    </location>
    <ligand>
        <name>ATP</name>
        <dbReference type="ChEBI" id="CHEBI:30616"/>
    </ligand>
</feature>
<gene>
    <name evidence="1" type="primary">recF</name>
    <name type="ordered locus">Smal_0003</name>
</gene>